<name>PTPB_STAA3</name>
<evidence type="ECO:0000250" key="1"/>
<evidence type="ECO:0000250" key="2">
    <source>
        <dbReference type="UniProtKB" id="P11064"/>
    </source>
</evidence>
<evidence type="ECO:0000305" key="3"/>
<sequence>MKILFVCTGNTCRSPLAESIAKEVMPNHQFESRGIFAVNNQGVSNYVEDLVEEHHLAETTLSQQFTEADLKADIILTMSYSHKELIEAHFGLQNHVFTLHEYVKEAGEVIDPYGGTKEMYVHTYEELVSLILKLKDIIC</sequence>
<reference key="1">
    <citation type="journal article" date="2006" name="Lancet">
        <title>Complete genome sequence of USA300, an epidemic clone of community-acquired meticillin-resistant Staphylococcus aureus.</title>
        <authorList>
            <person name="Diep B.A."/>
            <person name="Gill S.R."/>
            <person name="Chang R.F."/>
            <person name="Phan T.H."/>
            <person name="Chen J.H."/>
            <person name="Davidson M.G."/>
            <person name="Lin F."/>
            <person name="Lin J."/>
            <person name="Carleton H.A."/>
            <person name="Mongodin E.F."/>
            <person name="Sensabaugh G.F."/>
            <person name="Perdreau-Remington F."/>
        </authorList>
    </citation>
    <scope>NUCLEOTIDE SEQUENCE [LARGE SCALE GENOMIC DNA]</scope>
    <source>
        <strain>USA300</strain>
    </source>
</reference>
<comment type="function">
    <text evidence="1">Dephosphorylates the phosphotyrosine-containing proteins.</text>
</comment>
<comment type="catalytic activity">
    <reaction>
        <text>O-phospho-L-tyrosyl-[protein] + H2O = L-tyrosyl-[protein] + phosphate</text>
        <dbReference type="Rhea" id="RHEA:10684"/>
        <dbReference type="Rhea" id="RHEA-COMP:10136"/>
        <dbReference type="Rhea" id="RHEA-COMP:20101"/>
        <dbReference type="ChEBI" id="CHEBI:15377"/>
        <dbReference type="ChEBI" id="CHEBI:43474"/>
        <dbReference type="ChEBI" id="CHEBI:46858"/>
        <dbReference type="ChEBI" id="CHEBI:61978"/>
        <dbReference type="EC" id="3.1.3.48"/>
    </reaction>
</comment>
<comment type="similarity">
    <text evidence="3">Belongs to the low molecular weight phosphotyrosine protein phosphatase family.</text>
</comment>
<gene>
    <name type="primary">ptpB</name>
    <name type="ordered locus">SAUSA300_2069</name>
</gene>
<feature type="chain" id="PRO_0000300679" description="Low molecular weight protein-tyrosine-phosphatase PtpB">
    <location>
        <begin position="1"/>
        <end position="139"/>
    </location>
</feature>
<feature type="active site" description="Nucleophile" evidence="2">
    <location>
        <position position="7"/>
    </location>
</feature>
<feature type="active site" evidence="2">
    <location>
        <position position="13"/>
    </location>
</feature>
<feature type="active site" description="Proton donor" evidence="2">
    <location>
        <position position="111"/>
    </location>
</feature>
<organism>
    <name type="scientific">Staphylococcus aureus (strain USA300)</name>
    <dbReference type="NCBI Taxonomy" id="367830"/>
    <lineage>
        <taxon>Bacteria</taxon>
        <taxon>Bacillati</taxon>
        <taxon>Bacillota</taxon>
        <taxon>Bacilli</taxon>
        <taxon>Bacillales</taxon>
        <taxon>Staphylococcaceae</taxon>
        <taxon>Staphylococcus</taxon>
    </lineage>
</organism>
<protein>
    <recommendedName>
        <fullName>Low molecular weight protein-tyrosine-phosphatase PtpB</fullName>
        <ecNumber>3.1.3.48</ecNumber>
    </recommendedName>
    <alternativeName>
        <fullName>Phosphotyrosine phosphatase B</fullName>
        <shortName>PTPase B</shortName>
    </alternativeName>
</protein>
<keyword id="KW-0378">Hydrolase</keyword>
<keyword id="KW-0904">Protein phosphatase</keyword>
<dbReference type="EC" id="3.1.3.48"/>
<dbReference type="EMBL" id="CP000255">
    <property type="protein sequence ID" value="ABD21952.1"/>
    <property type="molecule type" value="Genomic_DNA"/>
</dbReference>
<dbReference type="RefSeq" id="WP_000697334.1">
    <property type="nucleotide sequence ID" value="NZ_CP027476.1"/>
</dbReference>
<dbReference type="SMR" id="Q2FF13"/>
<dbReference type="KEGG" id="saa:SAUSA300_2069"/>
<dbReference type="HOGENOM" id="CLU_071415_1_2_9"/>
<dbReference type="Proteomes" id="UP000001939">
    <property type="component" value="Chromosome"/>
</dbReference>
<dbReference type="GO" id="GO:0004725">
    <property type="term" value="F:protein tyrosine phosphatase activity"/>
    <property type="evidence" value="ECO:0007669"/>
    <property type="project" value="UniProtKB-EC"/>
</dbReference>
<dbReference type="CDD" id="cd16344">
    <property type="entry name" value="LMWPAP"/>
    <property type="match status" value="1"/>
</dbReference>
<dbReference type="Gene3D" id="3.40.50.2300">
    <property type="match status" value="1"/>
</dbReference>
<dbReference type="InterPro" id="IPR050438">
    <property type="entry name" value="LMW_PTPase"/>
</dbReference>
<dbReference type="InterPro" id="IPR023485">
    <property type="entry name" value="Ptyr_pPase"/>
</dbReference>
<dbReference type="InterPro" id="IPR036196">
    <property type="entry name" value="Ptyr_pPase_sf"/>
</dbReference>
<dbReference type="InterPro" id="IPR017867">
    <property type="entry name" value="Tyr_phospatase_low_mol_wt"/>
</dbReference>
<dbReference type="PANTHER" id="PTHR11717">
    <property type="entry name" value="LOW MOLECULAR WEIGHT PROTEIN TYROSINE PHOSPHATASE"/>
    <property type="match status" value="1"/>
</dbReference>
<dbReference type="PANTHER" id="PTHR11717:SF31">
    <property type="entry name" value="LOW MOLECULAR WEIGHT PROTEIN-TYROSINE-PHOSPHATASE ETP-RELATED"/>
    <property type="match status" value="1"/>
</dbReference>
<dbReference type="Pfam" id="PF01451">
    <property type="entry name" value="LMWPc"/>
    <property type="match status" value="1"/>
</dbReference>
<dbReference type="PRINTS" id="PR00719">
    <property type="entry name" value="LMWPTPASE"/>
</dbReference>
<dbReference type="SMART" id="SM00226">
    <property type="entry name" value="LMWPc"/>
    <property type="match status" value="1"/>
</dbReference>
<dbReference type="SUPFAM" id="SSF52788">
    <property type="entry name" value="Phosphotyrosine protein phosphatases I"/>
    <property type="match status" value="1"/>
</dbReference>
<accession>Q2FF13</accession>
<proteinExistence type="inferred from homology"/>